<reference key="1">
    <citation type="journal article" date="2007" name="Nature">
        <title>Evolution of genes and genomes on the Drosophila phylogeny.</title>
        <authorList>
            <consortium name="Drosophila 12 genomes consortium"/>
        </authorList>
    </citation>
    <scope>NUCLEOTIDE SEQUENCE [LARGE SCALE GENOMIC DNA]</scope>
    <source>
        <strain>Tucson 15010-1051.87</strain>
    </source>
</reference>
<organism>
    <name type="scientific">Drosophila virilis</name>
    <name type="common">Fruit fly</name>
    <dbReference type="NCBI Taxonomy" id="7244"/>
    <lineage>
        <taxon>Eukaryota</taxon>
        <taxon>Metazoa</taxon>
        <taxon>Ecdysozoa</taxon>
        <taxon>Arthropoda</taxon>
        <taxon>Hexapoda</taxon>
        <taxon>Insecta</taxon>
        <taxon>Pterygota</taxon>
        <taxon>Neoptera</taxon>
        <taxon>Endopterygota</taxon>
        <taxon>Diptera</taxon>
        <taxon>Brachycera</taxon>
        <taxon>Muscomorpha</taxon>
        <taxon>Ephydroidea</taxon>
        <taxon>Drosophilidae</taxon>
        <taxon>Drosophila</taxon>
    </lineage>
</organism>
<feature type="chain" id="PRO_0000365350" description="Eukaryotic translation initiation factor 3 subunit I">
    <location>
        <begin position="1"/>
        <end position="322"/>
    </location>
</feature>
<feature type="repeat" description="WD 1">
    <location>
        <begin position="4"/>
        <end position="43"/>
    </location>
</feature>
<feature type="repeat" description="WD 2">
    <location>
        <begin position="46"/>
        <end position="85"/>
    </location>
</feature>
<feature type="repeat" description="WD 3">
    <location>
        <begin position="141"/>
        <end position="180"/>
    </location>
</feature>
<feature type="repeat" description="WD 4">
    <location>
        <begin position="184"/>
        <end position="223"/>
    </location>
</feature>
<feature type="repeat" description="WD 5">
    <location>
        <begin position="281"/>
        <end position="322"/>
    </location>
</feature>
<evidence type="ECO:0000255" key="1">
    <source>
        <dbReference type="HAMAP-Rule" id="MF_03008"/>
    </source>
</evidence>
<evidence type="ECO:0000305" key="2"/>
<proteinExistence type="inferred from homology"/>
<protein>
    <recommendedName>
        <fullName evidence="1">Eukaryotic translation initiation factor 3 subunit I</fullName>
        <shortName evidence="1">eIF3i</shortName>
    </recommendedName>
    <alternativeName>
        <fullName evidence="1">Eukaryotic translation initiation factor 3 subunit 2</fullName>
    </alternativeName>
    <alternativeName>
        <fullName>TRIP-1 homolog</fullName>
    </alternativeName>
</protein>
<sequence>MLQGHERSITQIKYNREGDLLFSSSKDQKPNVWYSLNGERLGTYDGHQGAVWCLDVDWESRKLITGAGDMTTKIWDVEYGTVIASIPTKSSVRTSNFSFSGNQAAYSTDKAMGQNCELFIIDVRNADSSLSEQEPTLRIPMVESKITSMLWGPLDETIITGHDNGNIAIWDIRKGQKVVDSGTDHTAGINDMQLSKDGTMFVTASRDTTAKLFDSESLMCLKTYKTERPVNSAAISPILDHVVLGGGQDAMEVTTTSTKAGKFDSRFFHLIYEEEFARLKGHFGPINSLAFHPDGKSYASGGEDGFVRVQSFDSTYFENIFE</sequence>
<keyword id="KW-0963">Cytoplasm</keyword>
<keyword id="KW-0396">Initiation factor</keyword>
<keyword id="KW-0648">Protein biosynthesis</keyword>
<keyword id="KW-1185">Reference proteome</keyword>
<keyword id="KW-0677">Repeat</keyword>
<keyword id="KW-0853">WD repeat</keyword>
<gene>
    <name evidence="1" type="primary">eIF3i</name>
    <name evidence="1" type="synonym">eif3-S2</name>
    <name evidence="1" type="synonym">Trip1</name>
    <name type="ORF">GJ17275</name>
</gene>
<accession>B4LUA5</accession>
<dbReference type="EMBL" id="CH940649">
    <property type="protein sequence ID" value="EDW64092.1"/>
    <property type="status" value="ALT_INIT"/>
    <property type="molecule type" value="Genomic_DNA"/>
</dbReference>
<dbReference type="RefSeq" id="XP_002051937.2">
    <property type="nucleotide sequence ID" value="XM_002051901.2"/>
</dbReference>
<dbReference type="SMR" id="B4LUA5"/>
<dbReference type="FunCoup" id="B4LUA5">
    <property type="interactions" value="1577"/>
</dbReference>
<dbReference type="STRING" id="7244.B4LUA5"/>
<dbReference type="EnsemblMetazoa" id="FBtr0233200">
    <property type="protein sequence ID" value="FBpp0231692"/>
    <property type="gene ID" value="FBgn0204451"/>
</dbReference>
<dbReference type="EnsemblMetazoa" id="XM_002051901.3">
    <property type="protein sequence ID" value="XP_002051937.2"/>
    <property type="gene ID" value="LOC6629217"/>
</dbReference>
<dbReference type="GeneID" id="6629217"/>
<dbReference type="KEGG" id="dvi:6629217"/>
<dbReference type="CTD" id="8668"/>
<dbReference type="eggNOG" id="KOG0643">
    <property type="taxonomic scope" value="Eukaryota"/>
</dbReference>
<dbReference type="InParanoid" id="B4LUA5"/>
<dbReference type="OrthoDB" id="24966at2759"/>
<dbReference type="ChiTaRS" id="Trip1">
    <property type="organism name" value="fly"/>
</dbReference>
<dbReference type="Proteomes" id="UP000008792">
    <property type="component" value="Unassembled WGS sequence"/>
</dbReference>
<dbReference type="GO" id="GO:0016282">
    <property type="term" value="C:eukaryotic 43S preinitiation complex"/>
    <property type="evidence" value="ECO:0007669"/>
    <property type="project" value="UniProtKB-UniRule"/>
</dbReference>
<dbReference type="GO" id="GO:0033290">
    <property type="term" value="C:eukaryotic 48S preinitiation complex"/>
    <property type="evidence" value="ECO:0007669"/>
    <property type="project" value="UniProtKB-UniRule"/>
</dbReference>
<dbReference type="GO" id="GO:0071541">
    <property type="term" value="C:eukaryotic translation initiation factor 3 complex, eIF3m"/>
    <property type="evidence" value="ECO:0007669"/>
    <property type="project" value="TreeGrafter"/>
</dbReference>
<dbReference type="GO" id="GO:0003723">
    <property type="term" value="F:RNA binding"/>
    <property type="evidence" value="ECO:0007669"/>
    <property type="project" value="TreeGrafter"/>
</dbReference>
<dbReference type="GO" id="GO:0003743">
    <property type="term" value="F:translation initiation factor activity"/>
    <property type="evidence" value="ECO:0007669"/>
    <property type="project" value="UniProtKB-UniRule"/>
</dbReference>
<dbReference type="GO" id="GO:0001732">
    <property type="term" value="P:formation of cytoplasmic translation initiation complex"/>
    <property type="evidence" value="ECO:0007669"/>
    <property type="project" value="UniProtKB-UniRule"/>
</dbReference>
<dbReference type="FunFam" id="2.130.10.10:FF:000127">
    <property type="entry name" value="Eukaryotic translation initiation factor 3 subunit I"/>
    <property type="match status" value="1"/>
</dbReference>
<dbReference type="Gene3D" id="2.130.10.10">
    <property type="entry name" value="YVTN repeat-like/Quinoprotein amine dehydrogenase"/>
    <property type="match status" value="1"/>
</dbReference>
<dbReference type="HAMAP" id="MF_03008">
    <property type="entry name" value="eIF3i"/>
    <property type="match status" value="1"/>
</dbReference>
<dbReference type="InterPro" id="IPR027525">
    <property type="entry name" value="eIF3i"/>
</dbReference>
<dbReference type="InterPro" id="IPR015943">
    <property type="entry name" value="WD40/YVTN_repeat-like_dom_sf"/>
</dbReference>
<dbReference type="InterPro" id="IPR019775">
    <property type="entry name" value="WD40_repeat_CS"/>
</dbReference>
<dbReference type="InterPro" id="IPR036322">
    <property type="entry name" value="WD40_repeat_dom_sf"/>
</dbReference>
<dbReference type="InterPro" id="IPR001680">
    <property type="entry name" value="WD40_rpt"/>
</dbReference>
<dbReference type="PANTHER" id="PTHR19877">
    <property type="entry name" value="EUKARYOTIC TRANSLATION INITIATION FACTOR 3 SUBUNIT I"/>
    <property type="match status" value="1"/>
</dbReference>
<dbReference type="PANTHER" id="PTHR19877:SF1">
    <property type="entry name" value="EUKARYOTIC TRANSLATION INITIATION FACTOR 3 SUBUNIT I"/>
    <property type="match status" value="1"/>
</dbReference>
<dbReference type="Pfam" id="PF24805">
    <property type="entry name" value="EIF3I"/>
    <property type="match status" value="1"/>
</dbReference>
<dbReference type="SMART" id="SM00320">
    <property type="entry name" value="WD40"/>
    <property type="match status" value="6"/>
</dbReference>
<dbReference type="SUPFAM" id="SSF50978">
    <property type="entry name" value="WD40 repeat-like"/>
    <property type="match status" value="1"/>
</dbReference>
<dbReference type="PROSITE" id="PS00678">
    <property type="entry name" value="WD_REPEATS_1"/>
    <property type="match status" value="2"/>
</dbReference>
<dbReference type="PROSITE" id="PS50082">
    <property type="entry name" value="WD_REPEATS_2"/>
    <property type="match status" value="5"/>
</dbReference>
<dbReference type="PROSITE" id="PS50294">
    <property type="entry name" value="WD_REPEATS_REGION"/>
    <property type="match status" value="2"/>
</dbReference>
<comment type="function">
    <text evidence="1">Component of the eukaryotic translation initiation factor 3 (eIF-3) complex, which is involved in protein synthesis of a specialized repertoire of mRNAs and, together with other initiation factors, stimulates binding of mRNA and methionyl-tRNAi to the 40S ribosome. The eIF-3 complex specifically targets and initiates translation of a subset of mRNAs involved in cell proliferation.</text>
</comment>
<comment type="subunit">
    <text evidence="1">Component of the eukaryotic translation initiation factor 3 (eIF-3) complex. The eIF-3 complex interacts with pix.</text>
</comment>
<comment type="subcellular location">
    <subcellularLocation>
        <location evidence="1">Cytoplasm</location>
    </subcellularLocation>
</comment>
<comment type="similarity">
    <text evidence="1">Belongs to the eIF-3 subunit I family.</text>
</comment>
<comment type="sequence caution" evidence="2">
    <conflict type="erroneous initiation">
        <sequence resource="EMBL-CDS" id="EDW64092"/>
    </conflict>
</comment>
<name>EIF3I_DROVI</name>